<protein>
    <recommendedName>
        <fullName>C4-dicarboxylate transport protein 1</fullName>
    </recommendedName>
</protein>
<feature type="chain" id="PRO_0000202097" description="C4-dicarboxylate transport protein 1">
    <location>
        <begin position="1"/>
        <end position="449"/>
    </location>
</feature>
<feature type="transmembrane region" description="Helical" evidence="2">
    <location>
        <begin position="16"/>
        <end position="38"/>
    </location>
</feature>
<feature type="transmembrane region" description="Helical" evidence="2">
    <location>
        <begin position="53"/>
        <end position="71"/>
    </location>
</feature>
<feature type="transmembrane region" description="Helical" evidence="2">
    <location>
        <begin position="84"/>
        <end position="106"/>
    </location>
</feature>
<feature type="transmembrane region" description="Helical" evidence="2">
    <location>
        <begin position="157"/>
        <end position="176"/>
    </location>
</feature>
<feature type="transmembrane region" description="Helical" evidence="2">
    <location>
        <begin position="197"/>
        <end position="219"/>
    </location>
</feature>
<feature type="transmembrane region" description="Helical" evidence="2">
    <location>
        <begin position="229"/>
        <end position="251"/>
    </location>
</feature>
<feature type="transmembrane region" description="Helical" evidence="2">
    <location>
        <begin position="311"/>
        <end position="333"/>
    </location>
</feature>
<feature type="transmembrane region" description="Helical" evidence="2">
    <location>
        <begin position="358"/>
        <end position="380"/>
    </location>
</feature>
<evidence type="ECO:0000250" key="1"/>
<evidence type="ECO:0000255" key="2"/>
<evidence type="ECO:0000305" key="3"/>
<proteinExistence type="inferred from homology"/>
<sequence length="449" mass="47410">METPAMFIKRCSRSIFLQVVIGLVIGVICGVGIPDLAVQMKPLGDGFIKLIKMLIALIVFCVVVNGISGAGDLKKVGRIGLKSVIYFEILTTIALVLGLVVAYSLGLGSGANIHLNELPAGDVALYTGRTQEIHGPVAFLMGLIPTSVFSAFAENDILQVLLFSVLFGSALNLVGEQASGVARLINEFSHIVFRIMGMIVRLAPLGVFGAVAFTTARYGVDSLSHLGALVLVFYATCLVFVMAVLGSVLRLSGVRMLPFLRYFREELLIVMGTASSDAVLPQVMRKLEHMGIRSSTVGLVIPTGYSFNLDGFSIYLTLAVVFIAHVTGTPLAMTDLITILLVSLVTSKGAHGIPGSALVILAATLTAVPAIPVAGLVLVLSVDWFMGIGRALTNLIGNCVATVTIARWENDIDMPRAQAILDGRLEAPAKADGEPLKRSAVAGEGKLHG</sequence>
<keyword id="KW-0997">Cell inner membrane</keyword>
<keyword id="KW-1003">Cell membrane</keyword>
<keyword id="KW-0472">Membrane</keyword>
<keyword id="KW-1185">Reference proteome</keyword>
<keyword id="KW-0769">Symport</keyword>
<keyword id="KW-0812">Transmembrane</keyword>
<keyword id="KW-1133">Transmembrane helix</keyword>
<keyword id="KW-0813">Transport</keyword>
<reference key="1">
    <citation type="journal article" date="2000" name="Nature">
        <title>Complete genome sequence of Pseudomonas aeruginosa PAO1, an opportunistic pathogen.</title>
        <authorList>
            <person name="Stover C.K."/>
            <person name="Pham X.-Q.T."/>
            <person name="Erwin A.L."/>
            <person name="Mizoguchi S.D."/>
            <person name="Warrener P."/>
            <person name="Hickey M.J."/>
            <person name="Brinkman F.S.L."/>
            <person name="Hufnagle W.O."/>
            <person name="Kowalik D.J."/>
            <person name="Lagrou M."/>
            <person name="Garber R.L."/>
            <person name="Goltry L."/>
            <person name="Tolentino E."/>
            <person name="Westbrock-Wadman S."/>
            <person name="Yuan Y."/>
            <person name="Brody L.L."/>
            <person name="Coulter S.N."/>
            <person name="Folger K.R."/>
            <person name="Kas A."/>
            <person name="Larbig K."/>
            <person name="Lim R.M."/>
            <person name="Smith K.A."/>
            <person name="Spencer D.H."/>
            <person name="Wong G.K.-S."/>
            <person name="Wu Z."/>
            <person name="Paulsen I.T."/>
            <person name="Reizer J."/>
            <person name="Saier M.H. Jr."/>
            <person name="Hancock R.E.W."/>
            <person name="Lory S."/>
            <person name="Olson M.V."/>
        </authorList>
    </citation>
    <scope>NUCLEOTIDE SEQUENCE [LARGE SCALE GENOMIC DNA]</scope>
    <source>
        <strain>ATCC 15692 / DSM 22644 / CIP 104116 / JCM 14847 / LMG 12228 / 1C / PRS 101 / PAO1</strain>
    </source>
</reference>
<organism>
    <name type="scientific">Pseudomonas aeruginosa (strain ATCC 15692 / DSM 22644 / CIP 104116 / JCM 14847 / LMG 12228 / 1C / PRS 101 / PAO1)</name>
    <dbReference type="NCBI Taxonomy" id="208964"/>
    <lineage>
        <taxon>Bacteria</taxon>
        <taxon>Pseudomonadati</taxon>
        <taxon>Pseudomonadota</taxon>
        <taxon>Gammaproteobacteria</taxon>
        <taxon>Pseudomonadales</taxon>
        <taxon>Pseudomonadaceae</taxon>
        <taxon>Pseudomonas</taxon>
    </lineage>
</organism>
<dbReference type="EMBL" id="AE004091">
    <property type="protein sequence ID" value="AAG03509.1"/>
    <property type="molecule type" value="Genomic_DNA"/>
</dbReference>
<dbReference type="PIR" id="H83629">
    <property type="entry name" value="H83629"/>
</dbReference>
<dbReference type="RefSeq" id="NP_248809.1">
    <property type="nucleotide sequence ID" value="NC_002516.2"/>
</dbReference>
<dbReference type="RefSeq" id="WP_003142411.1">
    <property type="nucleotide sequence ID" value="NZ_QZGE01000015.1"/>
</dbReference>
<dbReference type="SMR" id="Q9I713"/>
<dbReference type="STRING" id="208964.PA0119"/>
<dbReference type="PaxDb" id="208964-PA0119"/>
<dbReference type="GeneID" id="877578"/>
<dbReference type="KEGG" id="pae:PA0119"/>
<dbReference type="PATRIC" id="fig|208964.12.peg.124"/>
<dbReference type="PseudoCAP" id="PA0119"/>
<dbReference type="HOGENOM" id="CLU_019375_7_0_6"/>
<dbReference type="InParanoid" id="Q9I713"/>
<dbReference type="OrthoDB" id="9766690at2"/>
<dbReference type="PhylomeDB" id="Q9I713"/>
<dbReference type="BioCyc" id="PAER208964:G1FZ6-121-MONOMER"/>
<dbReference type="Proteomes" id="UP000002438">
    <property type="component" value="Chromosome"/>
</dbReference>
<dbReference type="GO" id="GO:0005886">
    <property type="term" value="C:plasma membrane"/>
    <property type="evidence" value="ECO:0000318"/>
    <property type="project" value="GO_Central"/>
</dbReference>
<dbReference type="GO" id="GO:0015138">
    <property type="term" value="F:fumarate transmembrane transporter activity"/>
    <property type="evidence" value="ECO:0000318"/>
    <property type="project" value="GO_Central"/>
</dbReference>
<dbReference type="GO" id="GO:0015366">
    <property type="term" value="F:malate:proton symporter activity"/>
    <property type="evidence" value="ECO:0000318"/>
    <property type="project" value="GO_Central"/>
</dbReference>
<dbReference type="GO" id="GO:0015141">
    <property type="term" value="F:succinate transmembrane transporter activity"/>
    <property type="evidence" value="ECO:0000318"/>
    <property type="project" value="GO_Central"/>
</dbReference>
<dbReference type="GO" id="GO:0070778">
    <property type="term" value="P:L-aspartate transmembrane transport"/>
    <property type="evidence" value="ECO:0000318"/>
    <property type="project" value="GO_Central"/>
</dbReference>
<dbReference type="FunFam" id="1.10.3860.10:FF:000001">
    <property type="entry name" value="C4-dicarboxylate transport protein"/>
    <property type="match status" value="1"/>
</dbReference>
<dbReference type="Gene3D" id="1.10.3860.10">
    <property type="entry name" value="Sodium:dicarboxylate symporter"/>
    <property type="match status" value="1"/>
</dbReference>
<dbReference type="HAMAP" id="MF_01300">
    <property type="entry name" value="C4_dicarb_transport"/>
    <property type="match status" value="1"/>
</dbReference>
<dbReference type="InterPro" id="IPR023954">
    <property type="entry name" value="C4_dicarb_transport"/>
</dbReference>
<dbReference type="InterPro" id="IPR001991">
    <property type="entry name" value="Na-dicarboxylate_symporter"/>
</dbReference>
<dbReference type="InterPro" id="IPR018107">
    <property type="entry name" value="Na-dicarboxylate_symporter_CS"/>
</dbReference>
<dbReference type="InterPro" id="IPR036458">
    <property type="entry name" value="Na:dicarbo_symporter_sf"/>
</dbReference>
<dbReference type="NCBIfam" id="NF002461">
    <property type="entry name" value="PRK01663.1"/>
    <property type="match status" value="1"/>
</dbReference>
<dbReference type="NCBIfam" id="NF009587">
    <property type="entry name" value="PRK13027.1"/>
    <property type="match status" value="1"/>
</dbReference>
<dbReference type="PANTHER" id="PTHR42865:SF1">
    <property type="entry name" value="AEROBIC C4-DICARBOXYLATE TRANSPORT PROTEIN"/>
    <property type="match status" value="1"/>
</dbReference>
<dbReference type="PANTHER" id="PTHR42865">
    <property type="entry name" value="PROTON/GLUTAMATE-ASPARTATE SYMPORTER"/>
    <property type="match status" value="1"/>
</dbReference>
<dbReference type="Pfam" id="PF00375">
    <property type="entry name" value="SDF"/>
    <property type="match status" value="1"/>
</dbReference>
<dbReference type="PRINTS" id="PR00173">
    <property type="entry name" value="EDTRNSPORT"/>
</dbReference>
<dbReference type="SUPFAM" id="SSF118215">
    <property type="entry name" value="Proton glutamate symport protein"/>
    <property type="match status" value="1"/>
</dbReference>
<dbReference type="PROSITE" id="PS00714">
    <property type="entry name" value="NA_DICARBOXYL_SYMP_2"/>
    <property type="match status" value="1"/>
</dbReference>
<accession>Q9I713</accession>
<name>DCTA1_PSEAE</name>
<gene>
    <name type="primary">dctA1</name>
    <name type="ordered locus">PA0119</name>
</gene>
<comment type="function">
    <text evidence="1">Responsible for the transport of dicarboxylates such as succinate, fumarate, and malate from the periplasm across the membrane.</text>
</comment>
<comment type="subcellular location">
    <subcellularLocation>
        <location evidence="1">Cell inner membrane</location>
        <topology evidence="1">Multi-pass membrane protein</topology>
    </subcellularLocation>
</comment>
<comment type="similarity">
    <text evidence="3">Belongs to the dicarboxylate/amino acid:cation symporter (DAACS) (TC 2.A.23) family.</text>
</comment>